<name>5057R_ASFM2</name>
<comment type="function">
    <text evidence="1">Plays a role in virus cell tropism, and may be required for efficient virus replication in macrophages. Interferes with host NF-kappa-B promoter activity mediated by TLR8. Mechanistically, inhibits the phosphorylation and subsequent nuclear translocation of host NF-kappa-B RELA subunit downstream of TLR8. Promotes the expression of the autophagy-related protein host ULK1 to degrade host STING and inhibit the interferon response. Also inhibits JAK1- and JAK2-mediated signaling and thus negatively regulates the IFN-gamma signaling.</text>
</comment>
<comment type="subunit">
    <text evidence="1">Interacts with host STING1. Interacts with host JAK1; this interaction leads to JAK1 degradation. Interacts with host JAK2; this interaction leads to JAK2 degradation. Interacts with host RELA; this interaction inhibits NF-kappa-B promoter activity.</text>
</comment>
<comment type="subcellular location">
    <subcellularLocation>
        <location evidence="1">Host cytoplasm</location>
    </subcellularLocation>
</comment>
<comment type="induction">
    <text evidence="1">Expressed in the early phase of the viral replicative cycle.</text>
</comment>
<comment type="similarity">
    <text evidence="2">Belongs to the asfivirus MGF 505 family.</text>
</comment>
<keyword id="KW-0040">ANK repeat</keyword>
<keyword id="KW-0244">Early protein</keyword>
<keyword id="KW-1035">Host cytoplasm</keyword>
<keyword id="KW-0945">Host-virus interaction</keyword>
<keyword id="KW-1090">Inhibition of host innate immune response by virus</keyword>
<keyword id="KW-1114">Inhibition of host interferon signaling pathway by virus</keyword>
<keyword id="KW-1096">Inhibition of host JAK1 by virus</keyword>
<keyword id="KW-0922">Interferon antiviral system evasion</keyword>
<keyword id="KW-0677">Repeat</keyword>
<keyword id="KW-0899">Viral immunoevasion</keyword>
<sequence length="528" mass="61838">MFSLQDLCRKNTFFLPNGFNKHTLQLLGLYWKEHGSVHRVEKDNIMIQNELVLSINDALLLAGEEGDTDVVQLLLLWEGNLHYAIIGALKTEKYNLICEYHSQIEDWHILLPMIQDPETFEKCHDLSLQCDFICLLQHAIKYNKLSILVKYKEDLLNIRIRHRVQSLFVLACENRRTEIIEWIGQNLSIPEPDAIFSIAIATKDLELFSLGYKIIFDYMQRQGILQLSNGLRMVVLNRHISMAIDNGLLPFVLETLKHGGNIHRALSYAVSHNRRKILDYLIRQKNIPPNTIERLLYLAVKNQSSRKTLNLLLSYINYKVKNVKKLVEHVVDHNSTLVVTILLEKKINLIDAVLTRLVKHSTYFRVREFIQEFSISPEKFIKIAVREKRNVIIKGISEDIWENPAERITYLKQIVHTIKYESGREFLINIIHTIYQSYSLKPEEILKLARFYVKHNATTHFKDLCKYLWLNRGTESKKLFLECLEIADKKDFPAIKNIVSEYINYLFTAGAITKEEIMQVYTLEYAMY</sequence>
<dbReference type="EMBL" id="AY261361">
    <property type="status" value="NOT_ANNOTATED_CDS"/>
    <property type="molecule type" value="Genomic_DNA"/>
</dbReference>
<dbReference type="SMR" id="P0C9U3"/>
<dbReference type="Proteomes" id="UP000000860">
    <property type="component" value="Segment"/>
</dbReference>
<dbReference type="GO" id="GO:0030430">
    <property type="term" value="C:host cell cytoplasm"/>
    <property type="evidence" value="ECO:0007669"/>
    <property type="project" value="UniProtKB-SubCell"/>
</dbReference>
<dbReference type="GO" id="GO:0052170">
    <property type="term" value="P:symbiont-mediated suppression of host innate immune response"/>
    <property type="evidence" value="ECO:0007669"/>
    <property type="project" value="UniProtKB-KW"/>
</dbReference>
<dbReference type="GO" id="GO:0039576">
    <property type="term" value="P:symbiont-mediated suppression of host JAK-STAT cascade via inhibition of JAK1 activity"/>
    <property type="evidence" value="ECO:0007669"/>
    <property type="project" value="UniProtKB-KW"/>
</dbReference>
<dbReference type="GO" id="GO:0039502">
    <property type="term" value="P:symbiont-mediated suppression of host type I interferon-mediated signaling pathway"/>
    <property type="evidence" value="ECO:0007669"/>
    <property type="project" value="UniProtKB-KW"/>
</dbReference>
<dbReference type="Gene3D" id="1.25.40.20">
    <property type="entry name" value="Ankyrin repeat-containing domain"/>
    <property type="match status" value="1"/>
</dbReference>
<dbReference type="InterPro" id="IPR036770">
    <property type="entry name" value="Ankyrin_rpt-contain_sf"/>
</dbReference>
<dbReference type="InterPro" id="IPR004858">
    <property type="entry name" value="MGF_505"/>
</dbReference>
<dbReference type="Pfam" id="PF03158">
    <property type="entry name" value="DUF249"/>
    <property type="match status" value="1"/>
</dbReference>
<dbReference type="SUPFAM" id="SSF48403">
    <property type="entry name" value="Ankyrin repeat"/>
    <property type="match status" value="1"/>
</dbReference>
<proteinExistence type="inferred from homology"/>
<reference key="1">
    <citation type="submission" date="2003-03" db="EMBL/GenBank/DDBJ databases">
        <title>African swine fever virus genomes.</title>
        <authorList>
            <person name="Kutish G.F."/>
            <person name="Rock D.L."/>
        </authorList>
    </citation>
    <scope>NUCLEOTIDE SEQUENCE [LARGE SCALE GENOMIC DNA]</scope>
</reference>
<gene>
    <name type="ordered locus">Mal-039</name>
</gene>
<protein>
    <recommendedName>
        <fullName>Protein MGF 505-7R</fullName>
    </recommendedName>
</protein>
<organism>
    <name type="scientific">African swine fever virus (isolate Tick/Malawi/Lil 20-1/1983)</name>
    <name type="common">ASFV</name>
    <dbReference type="NCBI Taxonomy" id="10500"/>
    <lineage>
        <taxon>Viruses</taxon>
        <taxon>Varidnaviria</taxon>
        <taxon>Bamfordvirae</taxon>
        <taxon>Nucleocytoviricota</taxon>
        <taxon>Pokkesviricetes</taxon>
        <taxon>Asfuvirales</taxon>
        <taxon>Asfarviridae</taxon>
        <taxon>Asfivirus</taxon>
        <taxon>African swine fever virus</taxon>
    </lineage>
</organism>
<organismHost>
    <name type="scientific">Ornithodoros</name>
    <name type="common">relapsing fever ticks</name>
    <dbReference type="NCBI Taxonomy" id="6937"/>
</organismHost>
<organismHost>
    <name type="scientific">Phacochoerus aethiopicus</name>
    <name type="common">Warthog</name>
    <dbReference type="NCBI Taxonomy" id="85517"/>
</organismHost>
<organismHost>
    <name type="scientific">Phacochoerus africanus</name>
    <name type="common">Warthog</name>
    <dbReference type="NCBI Taxonomy" id="41426"/>
</organismHost>
<organismHost>
    <name type="scientific">Potamochoerus larvatus</name>
    <name type="common">Bushpig</name>
    <dbReference type="NCBI Taxonomy" id="273792"/>
</organismHost>
<organismHost>
    <name type="scientific">Sus scrofa</name>
    <name type="common">Pig</name>
    <dbReference type="NCBI Taxonomy" id="9823"/>
</organismHost>
<feature type="chain" id="PRO_0000373341" description="Protein MGF 505-7R">
    <location>
        <begin position="1"/>
        <end position="528"/>
    </location>
</feature>
<feature type="repeat" description="ANK 1">
    <location>
        <begin position="54"/>
        <end position="83"/>
    </location>
</feature>
<feature type="repeat" description="ANK 2">
    <location>
        <begin position="261"/>
        <end position="291"/>
    </location>
</feature>
<evidence type="ECO:0000250" key="1">
    <source>
        <dbReference type="UniProtKB" id="Q89925"/>
    </source>
</evidence>
<evidence type="ECO:0000305" key="2"/>
<accession>P0C9U3</accession>